<accession>Q8DSZ3</accession>
<comment type="similarity">
    <text evidence="1">Belongs to the bacterial ribosomal protein bL33 family.</text>
</comment>
<keyword id="KW-1185">Reference proteome</keyword>
<keyword id="KW-0687">Ribonucleoprotein</keyword>
<keyword id="KW-0689">Ribosomal protein</keyword>
<gene>
    <name evidence="1" type="primary">rpmG</name>
    <name type="ordered locus">SMU_1610</name>
</gene>
<proteinExistence type="inferred from homology"/>
<name>RL33_STRMU</name>
<protein>
    <recommendedName>
        <fullName evidence="1">Large ribosomal subunit protein bL33</fullName>
    </recommendedName>
    <alternativeName>
        <fullName evidence="2">50S ribosomal protein L33</fullName>
    </alternativeName>
</protein>
<evidence type="ECO:0000255" key="1">
    <source>
        <dbReference type="HAMAP-Rule" id="MF_00294"/>
    </source>
</evidence>
<evidence type="ECO:0000305" key="2"/>
<feature type="chain" id="PRO_0000356710" description="Large ribosomal subunit protein bL33">
    <location>
        <begin position="1"/>
        <end position="48"/>
    </location>
</feature>
<sequence length="48" mass="5652">MRIKINLQCSHCGSKNYLTSKNKKNHPEKIQVPKYCPKERKVTLHIES</sequence>
<dbReference type="EMBL" id="AE014133">
    <property type="protein sequence ID" value="AAN59251.1"/>
    <property type="molecule type" value="Genomic_DNA"/>
</dbReference>
<dbReference type="RefSeq" id="NP_721945.1">
    <property type="nucleotide sequence ID" value="NC_004350.2"/>
</dbReference>
<dbReference type="RefSeq" id="WP_002262780.1">
    <property type="nucleotide sequence ID" value="NC_004350.2"/>
</dbReference>
<dbReference type="SMR" id="Q8DSZ3"/>
<dbReference type="STRING" id="210007.SMU_1610"/>
<dbReference type="GeneID" id="93858963"/>
<dbReference type="KEGG" id="smu:SMU_1610"/>
<dbReference type="PATRIC" id="fig|210007.7.peg.1433"/>
<dbReference type="eggNOG" id="COG0267">
    <property type="taxonomic scope" value="Bacteria"/>
</dbReference>
<dbReference type="HOGENOM" id="CLU_190949_0_2_9"/>
<dbReference type="OrthoDB" id="197660at2"/>
<dbReference type="PhylomeDB" id="Q8DSZ3"/>
<dbReference type="Proteomes" id="UP000002512">
    <property type="component" value="Chromosome"/>
</dbReference>
<dbReference type="GO" id="GO:0005737">
    <property type="term" value="C:cytoplasm"/>
    <property type="evidence" value="ECO:0007669"/>
    <property type="project" value="UniProtKB-ARBA"/>
</dbReference>
<dbReference type="GO" id="GO:1990904">
    <property type="term" value="C:ribonucleoprotein complex"/>
    <property type="evidence" value="ECO:0007669"/>
    <property type="project" value="UniProtKB-KW"/>
</dbReference>
<dbReference type="GO" id="GO:0005840">
    <property type="term" value="C:ribosome"/>
    <property type="evidence" value="ECO:0007669"/>
    <property type="project" value="UniProtKB-KW"/>
</dbReference>
<dbReference type="GO" id="GO:0003735">
    <property type="term" value="F:structural constituent of ribosome"/>
    <property type="evidence" value="ECO:0007669"/>
    <property type="project" value="InterPro"/>
</dbReference>
<dbReference type="GO" id="GO:0006412">
    <property type="term" value="P:translation"/>
    <property type="evidence" value="ECO:0007669"/>
    <property type="project" value="UniProtKB-UniRule"/>
</dbReference>
<dbReference type="Gene3D" id="2.20.28.120">
    <property type="entry name" value="Ribosomal protein L33"/>
    <property type="match status" value="1"/>
</dbReference>
<dbReference type="HAMAP" id="MF_00294">
    <property type="entry name" value="Ribosomal_bL33"/>
    <property type="match status" value="1"/>
</dbReference>
<dbReference type="InterPro" id="IPR001705">
    <property type="entry name" value="Ribosomal_bL33"/>
</dbReference>
<dbReference type="InterPro" id="IPR018264">
    <property type="entry name" value="Ribosomal_bL33_CS"/>
</dbReference>
<dbReference type="InterPro" id="IPR038584">
    <property type="entry name" value="Ribosomal_bL33_sf"/>
</dbReference>
<dbReference type="InterPro" id="IPR011332">
    <property type="entry name" value="Ribosomal_zn-bd"/>
</dbReference>
<dbReference type="NCBIfam" id="NF001764">
    <property type="entry name" value="PRK00504.1"/>
    <property type="match status" value="1"/>
</dbReference>
<dbReference type="NCBIfam" id="NF001860">
    <property type="entry name" value="PRK00595.1"/>
    <property type="match status" value="1"/>
</dbReference>
<dbReference type="NCBIfam" id="TIGR01023">
    <property type="entry name" value="rpmG_bact"/>
    <property type="match status" value="1"/>
</dbReference>
<dbReference type="PANTHER" id="PTHR43168">
    <property type="entry name" value="50S RIBOSOMAL PROTEIN L33, CHLOROPLASTIC"/>
    <property type="match status" value="1"/>
</dbReference>
<dbReference type="PANTHER" id="PTHR43168:SF6">
    <property type="entry name" value="LARGE RIBOSOMAL SUBUNIT PROTEIN BL33A"/>
    <property type="match status" value="1"/>
</dbReference>
<dbReference type="Pfam" id="PF00471">
    <property type="entry name" value="Ribosomal_L33"/>
    <property type="match status" value="1"/>
</dbReference>
<dbReference type="SUPFAM" id="SSF57829">
    <property type="entry name" value="Zn-binding ribosomal proteins"/>
    <property type="match status" value="1"/>
</dbReference>
<dbReference type="PROSITE" id="PS00582">
    <property type="entry name" value="RIBOSOMAL_L33"/>
    <property type="match status" value="1"/>
</dbReference>
<organism>
    <name type="scientific">Streptococcus mutans serotype c (strain ATCC 700610 / UA159)</name>
    <dbReference type="NCBI Taxonomy" id="210007"/>
    <lineage>
        <taxon>Bacteria</taxon>
        <taxon>Bacillati</taxon>
        <taxon>Bacillota</taxon>
        <taxon>Bacilli</taxon>
        <taxon>Lactobacillales</taxon>
        <taxon>Streptococcaceae</taxon>
        <taxon>Streptococcus</taxon>
    </lineage>
</organism>
<reference key="1">
    <citation type="journal article" date="2002" name="Proc. Natl. Acad. Sci. U.S.A.">
        <title>Genome sequence of Streptococcus mutans UA159, a cariogenic dental pathogen.</title>
        <authorList>
            <person name="Ajdic D.J."/>
            <person name="McShan W.M."/>
            <person name="McLaughlin R.E."/>
            <person name="Savic G."/>
            <person name="Chang J."/>
            <person name="Carson M.B."/>
            <person name="Primeaux C."/>
            <person name="Tian R."/>
            <person name="Kenton S."/>
            <person name="Jia H.G."/>
            <person name="Lin S.P."/>
            <person name="Qian Y."/>
            <person name="Li S."/>
            <person name="Zhu H."/>
            <person name="Najar F.Z."/>
            <person name="Lai H."/>
            <person name="White J."/>
            <person name="Roe B.A."/>
            <person name="Ferretti J.J."/>
        </authorList>
    </citation>
    <scope>NUCLEOTIDE SEQUENCE [LARGE SCALE GENOMIC DNA]</scope>
    <source>
        <strain>ATCC 700610 / UA159</strain>
    </source>
</reference>